<protein>
    <recommendedName>
        <fullName evidence="1">Putative regulatory protein Clos_1422</fullName>
    </recommendedName>
</protein>
<sequence length="93" mass="10120">MGIKLINIGFGNIVSANRIVAIVSPESAPIKRVIQEARERGVLIDATYGRRTRAVIVTDSDHIILSAVQPETVAHRLNSKDNSKEIESVVDGE</sequence>
<organism>
    <name type="scientific">Alkaliphilus oremlandii (strain OhILAs)</name>
    <name type="common">Clostridium oremlandii (strain OhILAs)</name>
    <dbReference type="NCBI Taxonomy" id="350688"/>
    <lineage>
        <taxon>Bacteria</taxon>
        <taxon>Bacillati</taxon>
        <taxon>Bacillota</taxon>
        <taxon>Clostridia</taxon>
        <taxon>Peptostreptococcales</taxon>
        <taxon>Natronincolaceae</taxon>
        <taxon>Alkaliphilus</taxon>
    </lineage>
</organism>
<feature type="chain" id="PRO_1000068579" description="Putative regulatory protein Clos_1422">
    <location>
        <begin position="1"/>
        <end position="93"/>
    </location>
</feature>
<dbReference type="EMBL" id="CP000853">
    <property type="protein sequence ID" value="ABW18966.1"/>
    <property type="molecule type" value="Genomic_DNA"/>
</dbReference>
<dbReference type="RefSeq" id="WP_012159278.1">
    <property type="nucleotide sequence ID" value="NC_009922.1"/>
</dbReference>
<dbReference type="SMR" id="A8MH79"/>
<dbReference type="STRING" id="350688.Clos_1422"/>
<dbReference type="KEGG" id="aoe:Clos_1422"/>
<dbReference type="eggNOG" id="COG2052">
    <property type="taxonomic scope" value="Bacteria"/>
</dbReference>
<dbReference type="HOGENOM" id="CLU_165326_0_0_9"/>
<dbReference type="OrthoDB" id="5432174at2"/>
<dbReference type="Proteomes" id="UP000000269">
    <property type="component" value="Chromosome"/>
</dbReference>
<dbReference type="HAMAP" id="MF_01503">
    <property type="entry name" value="RemA"/>
    <property type="match status" value="1"/>
</dbReference>
<dbReference type="InterPro" id="IPR007169">
    <property type="entry name" value="RemA-like"/>
</dbReference>
<dbReference type="NCBIfam" id="NF046064">
    <property type="entry name" value="MtxBflmRegRemA"/>
    <property type="match status" value="1"/>
</dbReference>
<dbReference type="NCBIfam" id="NF003315">
    <property type="entry name" value="PRK04323.1"/>
    <property type="match status" value="1"/>
</dbReference>
<dbReference type="PANTHER" id="PTHR38449:SF1">
    <property type="entry name" value="REGULATORY PROTEIN SSL2874-RELATED"/>
    <property type="match status" value="1"/>
</dbReference>
<dbReference type="PANTHER" id="PTHR38449">
    <property type="entry name" value="REGULATORY PROTEIN TM_1690-RELATED"/>
    <property type="match status" value="1"/>
</dbReference>
<dbReference type="Pfam" id="PF04025">
    <property type="entry name" value="RemA-like"/>
    <property type="match status" value="1"/>
</dbReference>
<accession>A8MH79</accession>
<evidence type="ECO:0000255" key="1">
    <source>
        <dbReference type="HAMAP-Rule" id="MF_01503"/>
    </source>
</evidence>
<name>Y1422_ALKOO</name>
<comment type="similarity">
    <text evidence="1">Belongs to the RemA family.</text>
</comment>
<proteinExistence type="inferred from homology"/>
<gene>
    <name type="ordered locus">Clos_1422</name>
</gene>
<reference key="1">
    <citation type="submission" date="2007-10" db="EMBL/GenBank/DDBJ databases">
        <title>Complete genome of Alkaliphilus oremlandii OhILAs.</title>
        <authorList>
            <person name="Copeland A."/>
            <person name="Lucas S."/>
            <person name="Lapidus A."/>
            <person name="Barry K."/>
            <person name="Detter J.C."/>
            <person name="Glavina del Rio T."/>
            <person name="Hammon N."/>
            <person name="Israni S."/>
            <person name="Dalin E."/>
            <person name="Tice H."/>
            <person name="Pitluck S."/>
            <person name="Chain P."/>
            <person name="Malfatti S."/>
            <person name="Shin M."/>
            <person name="Vergez L."/>
            <person name="Schmutz J."/>
            <person name="Larimer F."/>
            <person name="Land M."/>
            <person name="Hauser L."/>
            <person name="Kyrpides N."/>
            <person name="Mikhailova N."/>
            <person name="Stolz J.F."/>
            <person name="Dawson A."/>
            <person name="Fisher E."/>
            <person name="Crable B."/>
            <person name="Perera E."/>
            <person name="Lisak J."/>
            <person name="Ranganathan M."/>
            <person name="Basu P."/>
            <person name="Richardson P."/>
        </authorList>
    </citation>
    <scope>NUCLEOTIDE SEQUENCE [LARGE SCALE GENOMIC DNA]</scope>
    <source>
        <strain>OhILAs</strain>
    </source>
</reference>
<keyword id="KW-1185">Reference proteome</keyword>